<proteinExistence type="evidence at protein level"/>
<feature type="peptide" id="PRO_0000455285" description="Tetrascorpin-1">
    <location>
        <begin position="1" status="less than"/>
        <end position="4" status="greater than"/>
    </location>
</feature>
<feature type="unsure residue" description="I or L" evidence="2">
    <location>
        <position position="1"/>
    </location>
</feature>
<feature type="non-terminal residue" evidence="2">
    <location>
        <position position="1"/>
    </location>
</feature>
<feature type="non-terminal residue" evidence="2">
    <location>
        <position position="4"/>
    </location>
</feature>
<evidence type="ECO:0000250" key="1">
    <source>
        <dbReference type="UniProtKB" id="P84464"/>
    </source>
</evidence>
<evidence type="ECO:0000269" key="2">
    <source>
    </source>
</evidence>
<evidence type="ECO:0000303" key="3">
    <source>
    </source>
</evidence>
<evidence type="ECO:0000305" key="4">
    <source>
    </source>
</evidence>
<sequence length="4" mass="533">IWKS</sequence>
<keyword id="KW-0108">Calcium channel impairing toxin</keyword>
<keyword id="KW-0903">Direct protein sequencing</keyword>
<keyword id="KW-0872">Ion channel impairing toxin</keyword>
<keyword id="KW-0964">Secreted</keyword>
<keyword id="KW-0800">Toxin</keyword>
<accession>C0HLZ5</accession>
<comment type="function">
    <text evidence="1 2">Specific inhibitor of store-operated non-voltage-gated calcium channels (By similarity). Decreases store-operated Ca2+ entry and cytosolic calcium concentration in a dose-dependent manner in U87 cells (PubMed:34946686). Exhibits anti-tumoral activity by inhibiting proliferation of human U87 glioblastoma cells (IC(50)=300 ug/mL) (PubMed:34946686). Also exhibits anti-tumoral activity towards human glioblastoma U251 cells, but with lower activity (IC(50) estimated to be more than 500 ug/mL) (PubMed:34946686).</text>
</comment>
<comment type="subcellular location">
    <subcellularLocation>
        <location evidence="2">Secreted</location>
    </subcellularLocation>
</comment>
<comment type="tissue specificity">
    <text evidence="4">Expressed by venom gland.</text>
</comment>
<comment type="mass spectrometry" mass="533.3158" method="Electrospray" evidence="2"/>
<comment type="miscellaneous">
    <text evidence="2">Negative results: has no effect on proliferation of the breast cancer cell line MDA-MB231, colon adenocarcinoma cell line LS174, and liver cancer cell line HepG2 (PubMed:34946686). Does not induce mortality in mice up to 3.5 ug doses (PubMed:34946686).</text>
</comment>
<dbReference type="GO" id="GO:0005576">
    <property type="term" value="C:extracellular region"/>
    <property type="evidence" value="ECO:0007669"/>
    <property type="project" value="UniProtKB-SubCell"/>
</dbReference>
<dbReference type="GO" id="GO:0005246">
    <property type="term" value="F:calcium channel regulator activity"/>
    <property type="evidence" value="ECO:0007669"/>
    <property type="project" value="UniProtKB-KW"/>
</dbReference>
<dbReference type="GO" id="GO:0090729">
    <property type="term" value="F:toxin activity"/>
    <property type="evidence" value="ECO:0007669"/>
    <property type="project" value="UniProtKB-KW"/>
</dbReference>
<name>TSCO1_ANDAU</name>
<organism>
    <name type="scientific">Androctonus australis</name>
    <name type="common">Sahara scorpion</name>
    <dbReference type="NCBI Taxonomy" id="6858"/>
    <lineage>
        <taxon>Eukaryota</taxon>
        <taxon>Metazoa</taxon>
        <taxon>Ecdysozoa</taxon>
        <taxon>Arthropoda</taxon>
        <taxon>Chelicerata</taxon>
        <taxon>Arachnida</taxon>
        <taxon>Scorpiones</taxon>
        <taxon>Buthida</taxon>
        <taxon>Buthoidea</taxon>
        <taxon>Buthidae</taxon>
        <taxon>Androctonus</taxon>
    </lineage>
</organism>
<protein>
    <recommendedName>
        <fullName evidence="3">Tetrascorpin-1</fullName>
        <shortName evidence="3">AaTs-1</shortName>
    </recommendedName>
</protein>
<reference key="1">
    <citation type="journal article" date="2021" name="Molecules">
        <title>AaTs-1: a tetrapeptide from Androctonus australis scorpion venom, inhibiting U87 glioblastoma cells proliferation by p53 and FPRL-1 up-regulations.</title>
        <authorList>
            <person name="Aissaoui-Zid D."/>
            <person name="Saada M.C."/>
            <person name="Moslah W."/>
            <person name="Potier-Cartereau M."/>
            <person name="Lemettre A."/>
            <person name="Othman H."/>
            <person name="Gaysinski M."/>
            <person name="Abdelkafi-Koubaa Z."/>
            <person name="Souid S."/>
            <person name="Marrakchi N."/>
            <person name="Vandier C."/>
            <person name="Essafi-Benkhadir K."/>
            <person name="Srairi-Abid N."/>
        </authorList>
    </citation>
    <scope>PROTEIN SEQUENCE</scope>
    <scope>FUNCTION</scope>
    <scope>SUBCELLULAR LOCATION</scope>
    <scope>TISSUE SPECIFICITY</scope>
    <scope>MASS SPECTROMETRY</scope>
</reference>